<reference key="1">
    <citation type="journal article" date="1995" name="Yeast">
        <title>Nucleotide sequence and analysis of the centromeric region of yeast chromosome IX.</title>
        <authorList>
            <person name="Voss H."/>
            <person name="Tamames J."/>
            <person name="Teodoru C."/>
            <person name="Valencia A."/>
            <person name="Sensen C."/>
            <person name="Wiemann S."/>
            <person name="Schwager C."/>
            <person name="Zimmermann J."/>
            <person name="Sander C."/>
            <person name="Ansorge W."/>
        </authorList>
    </citation>
    <scope>NUCLEOTIDE SEQUENCE [GENOMIC DNA]</scope>
    <source>
        <strain>ATCC 204508 / S288c</strain>
    </source>
</reference>
<reference key="2">
    <citation type="journal article" date="1997" name="Nature">
        <title>The nucleotide sequence of Saccharomyces cerevisiae chromosome IX.</title>
        <authorList>
            <person name="Churcher C.M."/>
            <person name="Bowman S."/>
            <person name="Badcock K."/>
            <person name="Bankier A.T."/>
            <person name="Brown D."/>
            <person name="Chillingworth T."/>
            <person name="Connor R."/>
            <person name="Devlin K."/>
            <person name="Gentles S."/>
            <person name="Hamlin N."/>
            <person name="Harris D.E."/>
            <person name="Horsnell T."/>
            <person name="Hunt S."/>
            <person name="Jagels K."/>
            <person name="Jones M."/>
            <person name="Lye G."/>
            <person name="Moule S."/>
            <person name="Odell C."/>
            <person name="Pearson D."/>
            <person name="Rajandream M.A."/>
            <person name="Rice P."/>
            <person name="Rowley N."/>
            <person name="Skelton J."/>
            <person name="Smith V."/>
            <person name="Walsh S.V."/>
            <person name="Whitehead S."/>
            <person name="Barrell B.G."/>
        </authorList>
    </citation>
    <scope>NUCLEOTIDE SEQUENCE [LARGE SCALE GENOMIC DNA]</scope>
    <source>
        <strain>ATCC 204508 / S288c</strain>
    </source>
</reference>
<reference key="3">
    <citation type="journal article" date="2014" name="G3 (Bethesda)">
        <title>The reference genome sequence of Saccharomyces cerevisiae: Then and now.</title>
        <authorList>
            <person name="Engel S.R."/>
            <person name="Dietrich F.S."/>
            <person name="Fisk D.G."/>
            <person name="Binkley G."/>
            <person name="Balakrishnan R."/>
            <person name="Costanzo M.C."/>
            <person name="Dwight S.S."/>
            <person name="Hitz B.C."/>
            <person name="Karra K."/>
            <person name="Nash R.S."/>
            <person name="Weng S."/>
            <person name="Wong E.D."/>
            <person name="Lloyd P."/>
            <person name="Skrzypek M.S."/>
            <person name="Miyasato S.R."/>
            <person name="Simison M."/>
            <person name="Cherry J.M."/>
        </authorList>
    </citation>
    <scope>GENOME REANNOTATION</scope>
    <source>
        <strain>ATCC 204508 / S288c</strain>
    </source>
</reference>
<reference key="4">
    <citation type="journal article" date="2002" name="Eukaryot. Cell">
        <title>Nnf1p, Dsn1p, Mtw1p, and Nsl1p: a new group of proteins important for chromosome segregation in Saccharomyces cerevisiae.</title>
        <authorList>
            <person name="Euskirchen G.M."/>
        </authorList>
    </citation>
    <scope>FUNCTION</scope>
    <scope>SUBCELLULAR LOCATION</scope>
</reference>
<reference key="5">
    <citation type="journal article" date="2003" name="EMBO J.">
        <title>Nsl1p is essential for the establishment of bipolarity and the localization of the Dam-Duo complex.</title>
        <authorList>
            <person name="Scharfenberger M."/>
            <person name="Ortiz J."/>
            <person name="Grau N."/>
            <person name="Janke C."/>
            <person name="Schiebel E."/>
            <person name="Lechner J."/>
        </authorList>
    </citation>
    <scope>IDENTIFICATION IN THE MIND COMPLEX</scope>
    <scope>SUBCELLULAR LOCATION</scope>
</reference>
<reference key="6">
    <citation type="journal article" date="2003" name="Mol. Cell">
        <title>Assigning function to yeast proteins by integration of technologies.</title>
        <authorList>
            <person name="Hazbun T.R."/>
            <person name="Malmstroem L."/>
            <person name="Anderson S."/>
            <person name="Graczyk B.J."/>
            <person name="Fox B."/>
            <person name="Riffle M."/>
            <person name="Sundin B.A."/>
            <person name="Aranda J.D."/>
            <person name="McDonald W.H."/>
            <person name="Chiu C.-H."/>
            <person name="Snydsman B.E."/>
            <person name="Bradley P."/>
            <person name="Muller E.G.D."/>
            <person name="Fields S."/>
            <person name="Baker D."/>
            <person name="Yates J.R. III"/>
            <person name="Davis T.N."/>
        </authorList>
    </citation>
    <scope>IDENTIFICATION BY MASS SPECTROMETRY</scope>
    <scope>INTERACTION WITH NSL1</scope>
</reference>
<reference key="7">
    <citation type="journal article" date="2003" name="Nature">
        <title>Global analysis of protein expression in yeast.</title>
        <authorList>
            <person name="Ghaemmaghami S."/>
            <person name="Huh W.-K."/>
            <person name="Bower K."/>
            <person name="Howson R.W."/>
            <person name="Belle A."/>
            <person name="Dephoure N."/>
            <person name="O'Shea E.K."/>
            <person name="Weissman J.S."/>
        </authorList>
    </citation>
    <scope>LEVEL OF PROTEIN EXPRESSION [LARGE SCALE ANALYSIS]</scope>
</reference>
<reference key="8">
    <citation type="journal article" date="2003" name="Dev. Cell">
        <title>An Mtw1 complex promotes kinetochore biorientation that is monitored by the Ipl1/Aurora protein kinase.</title>
        <authorList>
            <person name="Pinsky B.A."/>
            <person name="Tatsutani S.Y."/>
            <person name="Collins K.A."/>
            <person name="Biggins S."/>
        </authorList>
    </citation>
    <scope>IDENTIFICATION IN THE MIND COMPLEX</scope>
    <scope>SUBCELLULAR LOCATION</scope>
</reference>
<reference key="9">
    <citation type="journal article" date="2003" name="Genes Dev.">
        <title>Hierarchical assembly of the budding yeast kinetochore from multiple subcomplexes.</title>
        <authorList>
            <person name="De Wulf P."/>
            <person name="McAinsh A.D."/>
            <person name="Sorger P.K."/>
        </authorList>
    </citation>
    <scope>IDENTIFICATION IN THE MIND COMPLEX</scope>
    <scope>FUNCTION OF THE MIND COMPLEX</scope>
</reference>
<reference key="10">
    <citation type="journal article" date="2009" name="Science">
        <title>Global analysis of Cdk1 substrate phosphorylation sites provides insights into evolution.</title>
        <authorList>
            <person name="Holt L.J."/>
            <person name="Tuch B.B."/>
            <person name="Villen J."/>
            <person name="Johnson A.D."/>
            <person name="Gygi S.P."/>
            <person name="Morgan D.O."/>
        </authorList>
    </citation>
    <scope>PHOSPHORYLATION [LARGE SCALE ANALYSIS] AT SER-250</scope>
    <scope>IDENTIFICATION BY MASS SPECTROMETRY [LARGE SCALE ANALYSIS]</scope>
</reference>
<proteinExistence type="evidence at protein level"/>
<comment type="function">
    <text evidence="2 5">Acts as an essential component of the kinetochore MIND complex, which is required for the spindle checkpoint and kinetochore integrity. MIND plays a role in establishing a bipolar spindle-kinetochore interaction by joining kinetochore subunits contacting DNA to those contacting microtubules.</text>
</comment>
<comment type="subunit">
    <text evidence="4 5 6 7">Component of the MIND kinetochore complex, which is composed of at least MTW1, NNF1, NSL1 and DSN1. Interacts with NSL1.</text>
</comment>
<comment type="interaction">
    <interactant intactId="EBI-25398">
        <id>P40568</id>
    </interactant>
    <interactant intactId="EBI-22001">
        <id>P25651</id>
        <label>CSM1</label>
    </interactant>
    <organismsDiffer>false</organismsDiffer>
    <experiments>3</experiments>
</comment>
<comment type="interaction">
    <interactant intactId="EBI-25398">
        <id>P40568</id>
    </interactant>
    <interactant intactId="EBI-33666">
        <id>Q12143</id>
        <label>NSL1</label>
    </interactant>
    <organismsDiffer>false</organismsDiffer>
    <experiments>14</experiments>
</comment>
<comment type="subcellular location">
    <subcellularLocation>
        <location>Nucleus</location>
    </subcellularLocation>
    <subcellularLocation>
        <location>Chromosome</location>
        <location>Centromere</location>
        <location>Kinetochore</location>
    </subcellularLocation>
    <text>Associated with the kinetochore.</text>
</comment>
<comment type="miscellaneous">
    <text evidence="3">Present with 1310 molecules/cell in log phase SD medium.</text>
</comment>
<protein>
    <recommendedName>
        <fullName>Kinetochore-associated protein DSN1</fullName>
    </recommendedName>
</protein>
<organism>
    <name type="scientific">Saccharomyces cerevisiae (strain ATCC 204508 / S288c)</name>
    <name type="common">Baker's yeast</name>
    <dbReference type="NCBI Taxonomy" id="559292"/>
    <lineage>
        <taxon>Eukaryota</taxon>
        <taxon>Fungi</taxon>
        <taxon>Dikarya</taxon>
        <taxon>Ascomycota</taxon>
        <taxon>Saccharomycotina</taxon>
        <taxon>Saccharomycetes</taxon>
        <taxon>Saccharomycetales</taxon>
        <taxon>Saccharomycetaceae</taxon>
        <taxon>Saccharomyces</taxon>
    </lineage>
</organism>
<gene>
    <name type="primary">DSN1</name>
    <name type="ordered locus">YIR010W</name>
    <name type="ORF">YIB10W</name>
</gene>
<name>DSN1_YEAST</name>
<feature type="chain" id="PRO_0000080024" description="Kinetochore-associated protein DSN1">
    <location>
        <begin position="1"/>
        <end position="576"/>
    </location>
</feature>
<feature type="region of interest" description="Disordered" evidence="1">
    <location>
        <begin position="1"/>
        <end position="22"/>
    </location>
</feature>
<feature type="region of interest" description="Disordered" evidence="1">
    <location>
        <begin position="35"/>
        <end position="64"/>
    </location>
</feature>
<feature type="region of interest" description="Disordered" evidence="1">
    <location>
        <begin position="185"/>
        <end position="205"/>
    </location>
</feature>
<feature type="region of interest" description="Disordered" evidence="1">
    <location>
        <begin position="227"/>
        <end position="246"/>
    </location>
</feature>
<feature type="region of interest" description="Disordered" evidence="1">
    <location>
        <begin position="412"/>
        <end position="437"/>
    </location>
</feature>
<feature type="compositionally biased region" description="Polar residues" evidence="1">
    <location>
        <begin position="1"/>
        <end position="11"/>
    </location>
</feature>
<feature type="compositionally biased region" description="Basic residues" evidence="1">
    <location>
        <begin position="235"/>
        <end position="246"/>
    </location>
</feature>
<feature type="compositionally biased region" description="Basic and acidic residues" evidence="1">
    <location>
        <begin position="420"/>
        <end position="430"/>
    </location>
</feature>
<feature type="modified residue" description="Phosphoserine" evidence="8">
    <location>
        <position position="250"/>
    </location>
</feature>
<feature type="helix" evidence="10">
    <location>
        <begin position="88"/>
        <end position="100"/>
    </location>
</feature>
<feature type="helix" evidence="9">
    <location>
        <begin position="561"/>
        <end position="570"/>
    </location>
</feature>
<keyword id="KW-0002">3D-structure</keyword>
<keyword id="KW-0131">Cell cycle</keyword>
<keyword id="KW-0132">Cell division</keyword>
<keyword id="KW-0137">Centromere</keyword>
<keyword id="KW-0158">Chromosome</keyword>
<keyword id="KW-0995">Kinetochore</keyword>
<keyword id="KW-0498">Mitosis</keyword>
<keyword id="KW-0539">Nucleus</keyword>
<keyword id="KW-0597">Phosphoprotein</keyword>
<keyword id="KW-1185">Reference proteome</keyword>
<accession>P40568</accession>
<accession>D6VVU0</accession>
<evidence type="ECO:0000256" key="1">
    <source>
        <dbReference type="SAM" id="MobiDB-lite"/>
    </source>
</evidence>
<evidence type="ECO:0000269" key="2">
    <source>
    </source>
</evidence>
<evidence type="ECO:0000269" key="3">
    <source>
    </source>
</evidence>
<evidence type="ECO:0000269" key="4">
    <source>
    </source>
</evidence>
<evidence type="ECO:0000269" key="5">
    <source>
    </source>
</evidence>
<evidence type="ECO:0000269" key="6">
    <source>
    </source>
</evidence>
<evidence type="ECO:0000269" key="7">
    <source>
    </source>
</evidence>
<evidence type="ECO:0007744" key="8">
    <source>
    </source>
</evidence>
<evidence type="ECO:0007829" key="9">
    <source>
        <dbReference type="PDB" id="5T6J"/>
    </source>
</evidence>
<evidence type="ECO:0007829" key="10">
    <source>
        <dbReference type="PDB" id="6MJE"/>
    </source>
</evidence>
<sequence>MSLEPTQTVSGTPPMLHQRTHKQVYPLRMETIPILESDSKATLQSNEPTQKDEEETEYFENKQSVSNLSPDLKFKRHKNKHIQGFPTLGERLDNLQDIKKAKRVENFNSSAPIADDNHSGDATANATANATANATANVNASAMPAPYMPYYYYYHPMNAPTPAMIPYPGSPMHSIMPNSSLQPFYSQPTAAGGPDMTTPQNISSSQQLLPAPQLFPYGSFHQQQLQQPHYIQRTRERKKSIGSQRGRRLSMLASQANGGSTIISPHKDIPEEDFYTVVGNASFGKNLQIRQLFNWCLMRSLHKLELKAKNQEEEGELEHLTKKSKLESTKAETDYVDPKRLAMVIIKEFVDDLKKDHIAIDWEDEEKYEDEDEEKILDNTENYDDTELRQLFQENDDDDDDDDEVDYSEIQRSRRKFSERRKALPKEPKKLLPNSKNVENTKNLSILTSKVNAIKNEVKEWAVTLDTSRPDLEWQELTSFSSQPLEPLSDTEEPDLAIADVETKLETKVDELRYQSHILNSHSLALNEITNSKVNKLNIETMRKISSETDDDHSQVINPQQLLKGLSLSFSKKLDL</sequence>
<dbReference type="EMBL" id="X79743">
    <property type="status" value="NOT_ANNOTATED_CDS"/>
    <property type="molecule type" value="Genomic_DNA"/>
</dbReference>
<dbReference type="EMBL" id="Z37996">
    <property type="protein sequence ID" value="CAA86080.1"/>
    <property type="molecule type" value="Genomic_DNA"/>
</dbReference>
<dbReference type="EMBL" id="BK006942">
    <property type="protein sequence ID" value="DAA08556.1"/>
    <property type="molecule type" value="Genomic_DNA"/>
</dbReference>
<dbReference type="PIR" id="S48354">
    <property type="entry name" value="S48354"/>
</dbReference>
<dbReference type="RefSeq" id="NP_012275.3">
    <property type="nucleotide sequence ID" value="NM_001179532.3"/>
</dbReference>
<dbReference type="PDB" id="5T6J">
    <property type="method" value="X-ray"/>
    <property type="resolution" value="1.75 A"/>
    <property type="chains" value="C=560-572"/>
</dbReference>
<dbReference type="PDB" id="6MJE">
    <property type="method" value="X-ray"/>
    <property type="resolution" value="2.50 A"/>
    <property type="chains" value="B/D/F/H=71-110"/>
</dbReference>
<dbReference type="PDBsum" id="5T6J"/>
<dbReference type="PDBsum" id="6MJE"/>
<dbReference type="SMR" id="P40568"/>
<dbReference type="BioGRID" id="35002">
    <property type="interactions" value="661"/>
</dbReference>
<dbReference type="ComplexPortal" id="CPX-1186">
    <property type="entry name" value="Kinetochore MIS12 complex"/>
</dbReference>
<dbReference type="DIP" id="DIP-4794N"/>
<dbReference type="FunCoup" id="P40568">
    <property type="interactions" value="582"/>
</dbReference>
<dbReference type="IntAct" id="P40568">
    <property type="interactions" value="21"/>
</dbReference>
<dbReference type="MINT" id="P40568"/>
<dbReference type="STRING" id="4932.YIR010W"/>
<dbReference type="iPTMnet" id="P40568"/>
<dbReference type="PaxDb" id="4932-YIR010W"/>
<dbReference type="PeptideAtlas" id="P40568"/>
<dbReference type="EnsemblFungi" id="YIR010W_mRNA">
    <property type="protein sequence ID" value="YIR010W"/>
    <property type="gene ID" value="YIR010W"/>
</dbReference>
<dbReference type="GeneID" id="854827"/>
<dbReference type="KEGG" id="sce:YIR010W"/>
<dbReference type="AGR" id="SGD:S000001449"/>
<dbReference type="SGD" id="S000001449">
    <property type="gene designation" value="DSN1"/>
</dbReference>
<dbReference type="VEuPathDB" id="FungiDB:YIR010W"/>
<dbReference type="eggNOG" id="ENOG502QQ6A">
    <property type="taxonomic scope" value="Eukaryota"/>
</dbReference>
<dbReference type="HOGENOM" id="CLU_022497_1_0_1"/>
<dbReference type="InParanoid" id="P40568"/>
<dbReference type="OMA" id="PYMYYYP"/>
<dbReference type="OrthoDB" id="3364649at2759"/>
<dbReference type="BioCyc" id="YEAST:G3O-31431-MONOMER"/>
<dbReference type="Reactome" id="R-SCE-6798695">
    <property type="pathway name" value="Neutrophil degranulation"/>
</dbReference>
<dbReference type="BioGRID-ORCS" id="854827">
    <property type="hits" value="9 hits in 10 CRISPR screens"/>
</dbReference>
<dbReference type="CD-CODE" id="876000F7">
    <property type="entry name" value="Centrosome"/>
</dbReference>
<dbReference type="PRO" id="PR:P40568"/>
<dbReference type="Proteomes" id="UP000002311">
    <property type="component" value="Chromosome IX"/>
</dbReference>
<dbReference type="RNAct" id="P40568">
    <property type="molecule type" value="protein"/>
</dbReference>
<dbReference type="GO" id="GO:0000776">
    <property type="term" value="C:kinetochore"/>
    <property type="evidence" value="ECO:0000314"/>
    <property type="project" value="SGD"/>
</dbReference>
<dbReference type="GO" id="GO:0000444">
    <property type="term" value="C:MIS12/MIND type complex"/>
    <property type="evidence" value="ECO:0000314"/>
    <property type="project" value="SGD"/>
</dbReference>
<dbReference type="GO" id="GO:0005634">
    <property type="term" value="C:nucleus"/>
    <property type="evidence" value="ECO:0000314"/>
    <property type="project" value="ComplexPortal"/>
</dbReference>
<dbReference type="GO" id="GO:0000940">
    <property type="term" value="C:outer kinetochore"/>
    <property type="evidence" value="ECO:0000314"/>
    <property type="project" value="UniProtKB"/>
</dbReference>
<dbReference type="GO" id="GO:0000922">
    <property type="term" value="C:spindle pole"/>
    <property type="evidence" value="ECO:0000314"/>
    <property type="project" value="SGD"/>
</dbReference>
<dbReference type="GO" id="GO:0008608">
    <property type="term" value="P:attachment of spindle microtubules to kinetochore"/>
    <property type="evidence" value="ECO:0000303"/>
    <property type="project" value="ComplexPortal"/>
</dbReference>
<dbReference type="GO" id="GO:0051301">
    <property type="term" value="P:cell division"/>
    <property type="evidence" value="ECO:0007669"/>
    <property type="project" value="UniProtKB-KW"/>
</dbReference>
<dbReference type="GO" id="GO:0007059">
    <property type="term" value="P:chromosome segregation"/>
    <property type="evidence" value="ECO:0000314"/>
    <property type="project" value="SGD"/>
</dbReference>
<dbReference type="GO" id="GO:0051754">
    <property type="term" value="P:meiotic sister chromatid cohesion, centromeric"/>
    <property type="evidence" value="ECO:0000315"/>
    <property type="project" value="UniProtKB"/>
</dbReference>
<dbReference type="GO" id="GO:0051455">
    <property type="term" value="P:spindle attachment to meiosis I kinetochore"/>
    <property type="evidence" value="ECO:0000316"/>
    <property type="project" value="SGD"/>
</dbReference>
<dbReference type="InterPro" id="IPR013218">
    <property type="entry name" value="Dsn1/Mis13"/>
</dbReference>
<dbReference type="InterPro" id="IPR018247">
    <property type="entry name" value="EF_Hand_1_Ca_BS"/>
</dbReference>
<dbReference type="PANTHER" id="PTHR14778">
    <property type="entry name" value="KINETOCHORE-ASSOCIATED PROTEIN DSN1 HOMOLOG"/>
    <property type="match status" value="1"/>
</dbReference>
<dbReference type="PANTHER" id="PTHR14778:SF2">
    <property type="entry name" value="KINETOCHORE-ASSOCIATED PROTEIN DSN1 HOMOLOG"/>
    <property type="match status" value="1"/>
</dbReference>
<dbReference type="Pfam" id="PF08202">
    <property type="entry name" value="MIS13"/>
    <property type="match status" value="1"/>
</dbReference>